<name>TOLB_RICPR</name>
<feature type="signal peptide" evidence="1">
    <location>
        <begin position="1"/>
        <end position="18"/>
    </location>
</feature>
<feature type="chain" id="PRO_0000034681" description="Tol-Pal system protein TolB" evidence="1">
    <location>
        <begin position="19"/>
        <end position="443"/>
    </location>
</feature>
<gene>
    <name evidence="1" type="primary">tolB</name>
    <name type="ordered locus">RP302</name>
</gene>
<reference key="1">
    <citation type="journal article" date="1998" name="Nature">
        <title>The genome sequence of Rickettsia prowazekii and the origin of mitochondria.</title>
        <authorList>
            <person name="Andersson S.G.E."/>
            <person name="Zomorodipour A."/>
            <person name="Andersson J.O."/>
            <person name="Sicheritz-Ponten T."/>
            <person name="Alsmark U.C.M."/>
            <person name="Podowski R.M."/>
            <person name="Naeslund A.K."/>
            <person name="Eriksson A.-S."/>
            <person name="Winkler H.H."/>
            <person name="Kurland C.G."/>
        </authorList>
    </citation>
    <scope>NUCLEOTIDE SEQUENCE [LARGE SCALE GENOMIC DNA]</scope>
    <source>
        <strain>Madrid E</strain>
    </source>
</reference>
<accession>Q9ZDM5</accession>
<sequence>MRNIVYFILTLFSLTSYALETINIEHGRVDPTPIAVNKFNADSSNNDLVGRDVVKVISNDLKISGLFRPISSASFIEEQTGIKYKPLFAAWRQINASLLVNGEVKTLENGKLKISFILWDTFLEKQLTGALFEVPTKLWRRAAHKIADKIYEKITGDPGYFDTKIVYVSESTVLPKIKRIALMDYDGANNKYLTNGKSLVLTPRFAHSADKIFYVSYATKSRALVYEKDLKTGKESVVGDFVGISFAPRFSPDGKKAVMSIAKNGSTHIYEIDLATKQLNKLTNGFGINTSPSYSPDGKKIVFNSDKNGVPQLYIMNSDGSDVQRISFGVGSYASPSWSPRGDYIAFTKIIRQDGEKTFNIGIMKAYPQDHGNSERIITSGYLVDSPCWSPNGRVIMFSKGWPSKANAPGKNKIFTIDLTGHNEREIITPADASDPEWSGILN</sequence>
<evidence type="ECO:0000255" key="1">
    <source>
        <dbReference type="HAMAP-Rule" id="MF_00671"/>
    </source>
</evidence>
<evidence type="ECO:0000305" key="2"/>
<dbReference type="EMBL" id="AJ235271">
    <property type="protein sequence ID" value="CAA14763.1"/>
    <property type="molecule type" value="Genomic_DNA"/>
</dbReference>
<dbReference type="PIR" id="A71686">
    <property type="entry name" value="A71686"/>
</dbReference>
<dbReference type="RefSeq" id="NP_220686.1">
    <property type="nucleotide sequence ID" value="NC_000963.1"/>
</dbReference>
<dbReference type="RefSeq" id="WP_004597391.1">
    <property type="nucleotide sequence ID" value="NC_000963.1"/>
</dbReference>
<dbReference type="SMR" id="Q9ZDM5"/>
<dbReference type="STRING" id="272947.gene:17555383"/>
<dbReference type="EnsemblBacteria" id="CAA14763">
    <property type="protein sequence ID" value="CAA14763"/>
    <property type="gene ID" value="CAA14763"/>
</dbReference>
<dbReference type="GeneID" id="57569429"/>
<dbReference type="KEGG" id="rpr:RP302"/>
<dbReference type="PATRIC" id="fig|272947.5.peg.311"/>
<dbReference type="eggNOG" id="COG0823">
    <property type="taxonomic scope" value="Bacteria"/>
</dbReference>
<dbReference type="HOGENOM" id="CLU_047123_0_0_5"/>
<dbReference type="OrthoDB" id="9802240at2"/>
<dbReference type="Proteomes" id="UP000002480">
    <property type="component" value="Chromosome"/>
</dbReference>
<dbReference type="GO" id="GO:0042597">
    <property type="term" value="C:periplasmic space"/>
    <property type="evidence" value="ECO:0007669"/>
    <property type="project" value="UniProtKB-SubCell"/>
</dbReference>
<dbReference type="GO" id="GO:0051301">
    <property type="term" value="P:cell division"/>
    <property type="evidence" value="ECO:0007669"/>
    <property type="project" value="UniProtKB-UniRule"/>
</dbReference>
<dbReference type="GO" id="GO:0017038">
    <property type="term" value="P:protein import"/>
    <property type="evidence" value="ECO:0007669"/>
    <property type="project" value="InterPro"/>
</dbReference>
<dbReference type="Gene3D" id="2.120.10.30">
    <property type="entry name" value="TolB, C-terminal domain"/>
    <property type="match status" value="1"/>
</dbReference>
<dbReference type="Gene3D" id="3.40.50.10070">
    <property type="entry name" value="TolB, N-terminal domain"/>
    <property type="match status" value="1"/>
</dbReference>
<dbReference type="HAMAP" id="MF_00671">
    <property type="entry name" value="TolB"/>
    <property type="match status" value="1"/>
</dbReference>
<dbReference type="InterPro" id="IPR011042">
    <property type="entry name" value="6-blade_b-propeller_TolB-like"/>
</dbReference>
<dbReference type="InterPro" id="IPR011659">
    <property type="entry name" value="PD40"/>
</dbReference>
<dbReference type="InterPro" id="IPR014167">
    <property type="entry name" value="Tol-Pal_TolB"/>
</dbReference>
<dbReference type="InterPro" id="IPR007195">
    <property type="entry name" value="TolB_N"/>
</dbReference>
<dbReference type="NCBIfam" id="TIGR02800">
    <property type="entry name" value="propeller_TolB"/>
    <property type="match status" value="1"/>
</dbReference>
<dbReference type="PANTHER" id="PTHR36842:SF1">
    <property type="entry name" value="PROTEIN TOLB"/>
    <property type="match status" value="1"/>
</dbReference>
<dbReference type="PANTHER" id="PTHR36842">
    <property type="entry name" value="PROTEIN TOLB HOMOLOG"/>
    <property type="match status" value="1"/>
</dbReference>
<dbReference type="Pfam" id="PF07676">
    <property type="entry name" value="PD40"/>
    <property type="match status" value="3"/>
</dbReference>
<dbReference type="Pfam" id="PF04052">
    <property type="entry name" value="TolB_N"/>
    <property type="match status" value="1"/>
</dbReference>
<dbReference type="SUPFAM" id="SSF52964">
    <property type="entry name" value="TolB, N-terminal domain"/>
    <property type="match status" value="1"/>
</dbReference>
<dbReference type="SUPFAM" id="SSF69304">
    <property type="entry name" value="Tricorn protease N-terminal domain"/>
    <property type="match status" value="1"/>
</dbReference>
<comment type="function">
    <text evidence="1">Part of the Tol-Pal system, which plays a role in outer membrane invagination during cell division and is important for maintaining outer membrane integrity.</text>
</comment>
<comment type="subunit">
    <text evidence="1">The Tol-Pal system is composed of five core proteins: the inner membrane proteins TolA, TolQ and TolR, the periplasmic protein TolB and the outer membrane protein Pal. They form a network linking the inner and outer membranes and the peptidoglycan layer.</text>
</comment>
<comment type="subcellular location">
    <subcellularLocation>
        <location evidence="1 2">Periplasm</location>
    </subcellularLocation>
</comment>
<comment type="similarity">
    <text evidence="1 2">Belongs to the TolB family.</text>
</comment>
<keyword id="KW-0131">Cell cycle</keyword>
<keyword id="KW-0132">Cell division</keyword>
<keyword id="KW-0574">Periplasm</keyword>
<keyword id="KW-1185">Reference proteome</keyword>
<keyword id="KW-0732">Signal</keyword>
<organism>
    <name type="scientific">Rickettsia prowazekii (strain Madrid E)</name>
    <dbReference type="NCBI Taxonomy" id="272947"/>
    <lineage>
        <taxon>Bacteria</taxon>
        <taxon>Pseudomonadati</taxon>
        <taxon>Pseudomonadota</taxon>
        <taxon>Alphaproteobacteria</taxon>
        <taxon>Rickettsiales</taxon>
        <taxon>Rickettsiaceae</taxon>
        <taxon>Rickettsieae</taxon>
        <taxon>Rickettsia</taxon>
        <taxon>typhus group</taxon>
    </lineage>
</organism>
<proteinExistence type="inferred from homology"/>
<protein>
    <recommendedName>
        <fullName evidence="1">Tol-Pal system protein TolB</fullName>
    </recommendedName>
</protein>